<gene>
    <name type="primary">mdtO</name>
    <name type="synonym">yjcQ</name>
    <name type="ordered locus">b4081</name>
    <name type="ordered locus">JW4042</name>
</gene>
<sequence length="683" mass="76151">MSALNSLPLPVVRLLAFFHEELSERRPGRVPQTVQLWVGCLLVILISMTFEIPFVALSLAVLFYGIQSNAFYTKFVAILFVVATVLEIGSLFLIYKWSYGEPLIRLIIAGPILMGCMFLMRTHRLGLVFFAVAIVAIYGQTFPAMLDYPEVVVRLTLWCIVVGLYPTLLMTLIGVLWFPSRAISQMHQALNDRLDDAISHLTDSLAPLPETRIEREALALQKLNVFCLADDANWRTQNAWWQSCVATVTYIYSTLNRYDPTSFADSQAIIEFRQKLASEINKLQHAVAEGQCWQSDWRISESEAMAARECNLENICQTLLQLGQMDPNTPPTPAAKPPSMAADAFTNPDYMRYAVKTLLACLICYTFYSGVDWEGIHTCMLTCVIVANPNVGSSYQKMVLRFGGAFCGAILALLFTLLVMPWLDNIVELLFVLAPIFLLGAWIATSSERSSYIGTQMVVTFALATLENVFGPVYDLVEIRDRALGIIIGTVVSAVIYTFVWPESEARTLPQKLAGTLGMLSKVMRIPRQQEVTALRTYLQIRIGLHAAFNACEEMCQRVALERQLDSEERALLIERSQTVIRQGRDLLHAWDATWNSAQALDNALQPDRAGQFADALEKYAAGLATALSRSPQITLEETPASQAILPTLLKQEQHVCQLFARLPDWTAPALTPATEQAQGATQ</sequence>
<organism>
    <name type="scientific">Escherichia coli (strain K12)</name>
    <dbReference type="NCBI Taxonomy" id="83333"/>
    <lineage>
        <taxon>Bacteria</taxon>
        <taxon>Pseudomonadati</taxon>
        <taxon>Pseudomonadota</taxon>
        <taxon>Gammaproteobacteria</taxon>
        <taxon>Enterobacterales</taxon>
        <taxon>Enterobacteriaceae</taxon>
        <taxon>Escherichia</taxon>
    </lineage>
</organism>
<feature type="chain" id="PRO_0000210089" description="Multidrug resistance protein MdtO">
    <location>
        <begin position="1"/>
        <end position="683"/>
    </location>
</feature>
<feature type="transmembrane region" description="Helical" evidence="1">
    <location>
        <begin position="43"/>
        <end position="63"/>
    </location>
</feature>
<feature type="transmembrane region" description="Helical" evidence="1">
    <location>
        <begin position="75"/>
        <end position="95"/>
    </location>
</feature>
<feature type="transmembrane region" description="Helical" evidence="1">
    <location>
        <begin position="100"/>
        <end position="120"/>
    </location>
</feature>
<feature type="transmembrane region" description="Helical" evidence="1">
    <location>
        <begin position="125"/>
        <end position="145"/>
    </location>
</feature>
<feature type="transmembrane region" description="Helical" evidence="1">
    <location>
        <begin position="158"/>
        <end position="178"/>
    </location>
</feature>
<feature type="transmembrane region" description="Helical" evidence="1">
    <location>
        <begin position="402"/>
        <end position="422"/>
    </location>
</feature>
<feature type="transmembrane region" description="Helical" evidence="1">
    <location>
        <begin position="426"/>
        <end position="446"/>
    </location>
</feature>
<feature type="transmembrane region" description="Helical" evidence="1">
    <location>
        <begin position="457"/>
        <end position="477"/>
    </location>
</feature>
<feature type="transmembrane region" description="Helical" evidence="1">
    <location>
        <begin position="483"/>
        <end position="503"/>
    </location>
</feature>
<dbReference type="EMBL" id="U00006">
    <property type="protein sequence ID" value="AAC43175.1"/>
    <property type="status" value="ALT_INIT"/>
    <property type="molecule type" value="Genomic_DNA"/>
</dbReference>
<dbReference type="EMBL" id="U00096">
    <property type="protein sequence ID" value="AAD13464.2"/>
    <property type="molecule type" value="Genomic_DNA"/>
</dbReference>
<dbReference type="EMBL" id="AP009048">
    <property type="protein sequence ID" value="BAE78083.1"/>
    <property type="molecule type" value="Genomic_DNA"/>
</dbReference>
<dbReference type="PIR" id="H65216">
    <property type="entry name" value="H65216"/>
</dbReference>
<dbReference type="RefSeq" id="NP_418505.2">
    <property type="nucleotide sequence ID" value="NC_000913.3"/>
</dbReference>
<dbReference type="RefSeq" id="WP_001275207.1">
    <property type="nucleotide sequence ID" value="NZ_LN832404.1"/>
</dbReference>
<dbReference type="BioGRID" id="4262952">
    <property type="interactions" value="7"/>
</dbReference>
<dbReference type="BioGRID" id="852876">
    <property type="interactions" value="3"/>
</dbReference>
<dbReference type="ComplexPortal" id="CPX-6021">
    <property type="entry name" value="SdsRQP multidrug transport complex"/>
</dbReference>
<dbReference type="DIP" id="DIP-12556N"/>
<dbReference type="FunCoup" id="P32715">
    <property type="interactions" value="67"/>
</dbReference>
<dbReference type="IntAct" id="P32715">
    <property type="interactions" value="3"/>
</dbReference>
<dbReference type="STRING" id="511145.b4081"/>
<dbReference type="CARD" id="ARO:3003549">
    <property type="molecule name" value="mdtO"/>
    <property type="mechanism identifier" value="ARO:0010000"/>
    <property type="mechanism name" value="antibiotic efflux"/>
</dbReference>
<dbReference type="TCDB" id="2.A.85.6.1">
    <property type="family name" value="the aromatic acid exporter (arae) family"/>
</dbReference>
<dbReference type="PaxDb" id="511145-b4081"/>
<dbReference type="EnsemblBacteria" id="AAD13464">
    <property type="protein sequence ID" value="AAD13464"/>
    <property type="gene ID" value="b4081"/>
</dbReference>
<dbReference type="GeneID" id="948582"/>
<dbReference type="KEGG" id="ecj:JW4042"/>
<dbReference type="KEGG" id="eco:b4081"/>
<dbReference type="KEGG" id="ecoc:C3026_22060"/>
<dbReference type="PATRIC" id="fig|1411691.4.peg.2620"/>
<dbReference type="EchoBASE" id="EB1896"/>
<dbReference type="eggNOG" id="COG1289">
    <property type="taxonomic scope" value="Bacteria"/>
</dbReference>
<dbReference type="HOGENOM" id="CLU_023392_1_0_6"/>
<dbReference type="InParanoid" id="P32715"/>
<dbReference type="OMA" id="WPGIHTC"/>
<dbReference type="OrthoDB" id="105720at2"/>
<dbReference type="BioCyc" id="EcoCyc:YJCQ-MONOMER"/>
<dbReference type="BioCyc" id="MetaCyc:YJCQ-MONOMER"/>
<dbReference type="PRO" id="PR:P32715"/>
<dbReference type="Proteomes" id="UP000000625">
    <property type="component" value="Chromosome"/>
</dbReference>
<dbReference type="GO" id="GO:0016020">
    <property type="term" value="C:membrane"/>
    <property type="evidence" value="ECO:0000303"/>
    <property type="project" value="ComplexPortal"/>
</dbReference>
<dbReference type="GO" id="GO:0005886">
    <property type="term" value="C:plasma membrane"/>
    <property type="evidence" value="ECO:0000314"/>
    <property type="project" value="EcoCyc"/>
</dbReference>
<dbReference type="GO" id="GO:1990351">
    <property type="term" value="C:transporter complex"/>
    <property type="evidence" value="ECO:0000303"/>
    <property type="project" value="ComplexPortal"/>
</dbReference>
<dbReference type="GO" id="GO:0015546">
    <property type="term" value="F:sulfathiazole transmembrane transporter activity"/>
    <property type="evidence" value="ECO:0000269"/>
    <property type="project" value="EcoCyc"/>
</dbReference>
<dbReference type="GO" id="GO:0046677">
    <property type="term" value="P:response to antibiotic"/>
    <property type="evidence" value="ECO:0007669"/>
    <property type="project" value="UniProtKB-KW"/>
</dbReference>
<dbReference type="GO" id="GO:1902599">
    <property type="term" value="P:sulfathiazole transmembrane transport"/>
    <property type="evidence" value="ECO:0000269"/>
    <property type="project" value="EcoCyc"/>
</dbReference>
<dbReference type="GO" id="GO:0055085">
    <property type="term" value="P:transmembrane transport"/>
    <property type="evidence" value="ECO:0000303"/>
    <property type="project" value="ComplexPortal"/>
</dbReference>
<dbReference type="InterPro" id="IPR006726">
    <property type="entry name" value="PHBA_efflux_AaeB/fusaric-R"/>
</dbReference>
<dbReference type="NCBIfam" id="NF008510">
    <property type="entry name" value="PRK11427.1"/>
    <property type="match status" value="1"/>
</dbReference>
<dbReference type="PANTHER" id="PTHR30509:SF9">
    <property type="entry name" value="MULTIDRUG RESISTANCE PROTEIN MDTO"/>
    <property type="match status" value="1"/>
</dbReference>
<dbReference type="PANTHER" id="PTHR30509">
    <property type="entry name" value="P-HYDROXYBENZOIC ACID EFFLUX PUMP SUBUNIT-RELATED"/>
    <property type="match status" value="1"/>
</dbReference>
<dbReference type="Pfam" id="PF04632">
    <property type="entry name" value="FUSC"/>
    <property type="match status" value="1"/>
</dbReference>
<protein>
    <recommendedName>
        <fullName>Multidrug resistance protein MdtO</fullName>
    </recommendedName>
</protein>
<reference key="1">
    <citation type="journal article" date="1993" name="Nucleic Acids Res.">
        <title>Analysis of the Escherichia coli genome. IV. DNA sequence of the region from 89.2 to 92.8 minutes.</title>
        <authorList>
            <person name="Blattner F.R."/>
            <person name="Burland V.D."/>
            <person name="Plunkett G. III"/>
            <person name="Sofia H.J."/>
            <person name="Daniels D.L."/>
        </authorList>
    </citation>
    <scope>NUCLEOTIDE SEQUENCE [LARGE SCALE GENOMIC DNA]</scope>
    <source>
        <strain>K12 / MG1655 / ATCC 47076</strain>
    </source>
</reference>
<reference key="2">
    <citation type="journal article" date="1997" name="Science">
        <title>The complete genome sequence of Escherichia coli K-12.</title>
        <authorList>
            <person name="Blattner F.R."/>
            <person name="Plunkett G. III"/>
            <person name="Bloch C.A."/>
            <person name="Perna N.T."/>
            <person name="Burland V."/>
            <person name="Riley M."/>
            <person name="Collado-Vides J."/>
            <person name="Glasner J.D."/>
            <person name="Rode C.K."/>
            <person name="Mayhew G.F."/>
            <person name="Gregor J."/>
            <person name="Davis N.W."/>
            <person name="Kirkpatrick H.A."/>
            <person name="Goeden M.A."/>
            <person name="Rose D.J."/>
            <person name="Mau B."/>
            <person name="Shao Y."/>
        </authorList>
    </citation>
    <scope>NUCLEOTIDE SEQUENCE [LARGE SCALE GENOMIC DNA]</scope>
    <source>
        <strain>K12 / MG1655 / ATCC 47076</strain>
    </source>
</reference>
<reference key="3">
    <citation type="journal article" date="2006" name="Mol. Syst. Biol.">
        <title>Highly accurate genome sequences of Escherichia coli K-12 strains MG1655 and W3110.</title>
        <authorList>
            <person name="Hayashi K."/>
            <person name="Morooka N."/>
            <person name="Yamamoto Y."/>
            <person name="Fujita K."/>
            <person name="Isono K."/>
            <person name="Choi S."/>
            <person name="Ohtsubo E."/>
            <person name="Baba T."/>
            <person name="Wanner B.L."/>
            <person name="Mori H."/>
            <person name="Horiuchi T."/>
        </authorList>
    </citation>
    <scope>NUCLEOTIDE SEQUENCE [LARGE SCALE GENOMIC DNA]</scope>
    <source>
        <strain>K12 / W3110 / ATCC 27325 / DSM 5911</strain>
    </source>
</reference>
<reference key="4">
    <citation type="journal article" date="2001" name="Antimicrob. Agents Chemother.">
        <title>Antibiotic susceptibility profiles of Escherichia coli strains lacking multidrug efflux pump genes.</title>
        <authorList>
            <person name="Sulavik M.C."/>
            <person name="Houseweart C."/>
            <person name="Cramer C."/>
            <person name="Jiwani N."/>
            <person name="Murgolo N."/>
            <person name="Greene J."/>
            <person name="DiDomenico B."/>
            <person name="Shaw K.J."/>
            <person name="Miller G.H."/>
            <person name="Hare R."/>
            <person name="Shimer G."/>
        </authorList>
    </citation>
    <scope>PUTATIVE FUNCTION</scope>
</reference>
<reference key="5">
    <citation type="journal article" date="2005" name="Science">
        <title>Global topology analysis of the Escherichia coli inner membrane proteome.</title>
        <authorList>
            <person name="Daley D.O."/>
            <person name="Rapp M."/>
            <person name="Granseth E."/>
            <person name="Melen K."/>
            <person name="Drew D."/>
            <person name="von Heijne G."/>
        </authorList>
    </citation>
    <scope>SUBCELLULAR LOCATION</scope>
    <source>
        <strain>K12 / MG1655 / ATCC 47076</strain>
    </source>
</reference>
<reference key="6">
    <citation type="journal article" date="2009" name="J. Bacteriol.">
        <title>Involvement of the leucine response transcription factor LeuO in regulation of the genes for sulfa drug efflux.</title>
        <authorList>
            <person name="Shimada T."/>
            <person name="Yamamoto K."/>
            <person name="Ishihama A."/>
        </authorList>
    </citation>
    <scope>OPERON STRUCTURE</scope>
    <scope>INDUCTION</scope>
    <source>
        <strain>K12 / BW25113</strain>
    </source>
</reference>
<comment type="function">
    <text>Could be involved in resistance to puromycin, acriflavine and tetraphenylarsonium chloride.</text>
</comment>
<comment type="subunit">
    <text>Could be part of a tripartite efflux system composed of MdtN, MdtO and MdtP.</text>
</comment>
<comment type="interaction">
    <interactant intactId="EBI-555775">
        <id>P32715</id>
    </interactant>
    <interactant intactId="EBI-555763">
        <id>P76237</id>
        <label>dgcJ</label>
    </interactant>
    <organismsDiffer>false</organismsDiffer>
    <experiments>2</experiments>
</comment>
<comment type="interaction">
    <interactant intactId="EBI-555775">
        <id>P32715</id>
    </interactant>
    <interactant intactId="EBI-555713">
        <id>P07395</id>
        <label>pheT</label>
    </interactant>
    <organismsDiffer>false</organismsDiffer>
    <experiments>4</experiments>
</comment>
<comment type="subcellular location">
    <subcellularLocation>
        <location evidence="4">Cell inner membrane</location>
        <topology evidence="4">Multi-pass membrane protein</topology>
    </subcellularLocation>
</comment>
<comment type="induction">
    <text evidence="2">Induced by LeuO, part of the mdtNO operon.</text>
</comment>
<comment type="similarity">
    <text evidence="3">Belongs to the MdtO family.</text>
</comment>
<comment type="sequence caution" evidence="3">
    <conflict type="erroneous initiation">
        <sequence resource="EMBL-CDS" id="AAC43175"/>
    </conflict>
    <text>Truncated N-terminus.</text>
</comment>
<evidence type="ECO:0000255" key="1"/>
<evidence type="ECO:0000269" key="2">
    <source>
    </source>
</evidence>
<evidence type="ECO:0000305" key="3"/>
<evidence type="ECO:0000305" key="4">
    <source>
    </source>
</evidence>
<keyword id="KW-0046">Antibiotic resistance</keyword>
<keyword id="KW-0997">Cell inner membrane</keyword>
<keyword id="KW-1003">Cell membrane</keyword>
<keyword id="KW-0472">Membrane</keyword>
<keyword id="KW-1185">Reference proteome</keyword>
<keyword id="KW-0812">Transmembrane</keyword>
<keyword id="KW-1133">Transmembrane helix</keyword>
<keyword id="KW-0813">Transport</keyword>
<name>MDTO_ECOLI</name>
<proteinExistence type="evidence at protein level"/>
<accession>P32715</accession>
<accession>Q2M6M3</accession>